<reference key="1">
    <citation type="journal article" date="2014" name="Proc. Natl. Acad. Sci. U.S.A.">
        <title>Extensive sampling of basidiomycete genomes demonstrates inadequacy of the white-rot/brown-rot paradigm for wood decay fungi.</title>
        <authorList>
            <person name="Riley R."/>
            <person name="Salamov A.A."/>
            <person name="Brown D.W."/>
            <person name="Nagy L.G."/>
            <person name="Floudas D."/>
            <person name="Held B.W."/>
            <person name="Levasseur A."/>
            <person name="Lombard V."/>
            <person name="Morin E."/>
            <person name="Otillar R."/>
            <person name="Lindquist E.A."/>
            <person name="Sun H."/>
            <person name="LaButti K.M."/>
            <person name="Schmutz J."/>
            <person name="Jabbour D."/>
            <person name="Luo H."/>
            <person name="Baker S.E."/>
            <person name="Pisabarro A.G."/>
            <person name="Walton J.D."/>
            <person name="Blanchette R.A."/>
            <person name="Henrissat B."/>
            <person name="Martin F."/>
            <person name="Cullen D."/>
            <person name="Hibbett D.S."/>
            <person name="Grigoriev I.V."/>
        </authorList>
    </citation>
    <scope>NUCLEOTIDE SEQUENCE [LARGE SCALE GENOMIC DNA]</scope>
    <source>
        <strain>PC15</strain>
    </source>
</reference>
<reference key="2">
    <citation type="journal article" date="2021" name="Microbiol. Res.">
        <title>Identification of hydrophobin genes and their physiological functions related to growth and development in Pleurotus ostreatus.</title>
        <authorList>
            <person name="Xu D."/>
            <person name="Wang Y."/>
            <person name="Keerio A.A."/>
            <person name="Ma A."/>
        </authorList>
    </citation>
    <scope>IDENTIFICATION</scope>
    <scope>FUNCTION</scope>
    <scope>DEVELOPMENTAL STAGE</scope>
</reference>
<comment type="function">
    <text evidence="3 5">Aerial growth, conidiation, and dispersal of filamentous fungi in the environment rely upon a capability of their secreting small amphipathic proteins called hydrophobins (HPBs) with low sequence identity. Class I can self-assemble into an outermost layer of rodlet bundles on aerial cell surfaces, conferring cellular hydrophobicity that supports fungal growth, development and dispersal; whereas Class II form highly ordered films at water-air interfaces through intermolecular interactions but contribute nothing to the rodlet structure (Probable). Hydph20 is a class I hydrophobin involved in mycelial growth (PubMed:33636611).</text>
</comment>
<comment type="subunit">
    <text evidence="1">Self-assembles to form functional amyloid fibrils called rodlets. Self-assembly into fibrillar rodlets occurs spontaneously at hydrophobic:hydrophilic interfaces and the rodlets further associate laterally to form amphipathic monolayers.</text>
</comment>
<comment type="subcellular location">
    <subcellularLocation>
        <location evidence="6">Secreted</location>
    </subcellularLocation>
    <subcellularLocation>
        <location evidence="6">Secreted</location>
        <location evidence="6">Cell wall</location>
    </subcellularLocation>
</comment>
<comment type="developmental stage">
    <text evidence="3">Highly expressed in both in monokaryotic and dikaryotic mycelia.</text>
</comment>
<comment type="similarity">
    <text evidence="5">Belongs to the fungal hydrophobin family.</text>
</comment>
<keyword id="KW-0134">Cell wall</keyword>
<keyword id="KW-1015">Disulfide bond</keyword>
<keyword id="KW-1185">Reference proteome</keyword>
<keyword id="KW-0964">Secreted</keyword>
<keyword id="KW-0732">Signal</keyword>
<protein>
    <recommendedName>
        <fullName evidence="4">Class I hydrophobin 20</fullName>
    </recommendedName>
</protein>
<proteinExistence type="evidence at transcript level"/>
<dbReference type="EMBL" id="KL198014">
    <property type="protein sequence ID" value="KDQ22990.1"/>
    <property type="molecule type" value="Genomic_DNA"/>
</dbReference>
<dbReference type="STRING" id="1137138.A0A067N7P3"/>
<dbReference type="VEuPathDB" id="FungiDB:PLEOSDRAFT_163649"/>
<dbReference type="HOGENOM" id="CLU_1807015_0_0_1"/>
<dbReference type="InParanoid" id="A0A067N7P3"/>
<dbReference type="OrthoDB" id="138913at5338"/>
<dbReference type="Proteomes" id="UP000027073">
    <property type="component" value="Unassembled WGS sequence"/>
</dbReference>
<dbReference type="GO" id="GO:0005576">
    <property type="term" value="C:extracellular region"/>
    <property type="evidence" value="ECO:0007669"/>
    <property type="project" value="UniProtKB-KW"/>
</dbReference>
<dbReference type="GO" id="GO:0009277">
    <property type="term" value="C:fungal-type cell wall"/>
    <property type="evidence" value="ECO:0007669"/>
    <property type="project" value="InterPro"/>
</dbReference>
<dbReference type="GO" id="GO:0005199">
    <property type="term" value="F:structural constituent of cell wall"/>
    <property type="evidence" value="ECO:0007669"/>
    <property type="project" value="InterPro"/>
</dbReference>
<dbReference type="CDD" id="cd23507">
    <property type="entry name" value="hydrophobin_I"/>
    <property type="match status" value="1"/>
</dbReference>
<dbReference type="InterPro" id="IPR001338">
    <property type="entry name" value="Hydrophobin"/>
</dbReference>
<dbReference type="Pfam" id="PF01185">
    <property type="entry name" value="Hydrophobin"/>
    <property type="match status" value="1"/>
</dbReference>
<dbReference type="SMART" id="SM00075">
    <property type="entry name" value="HYDRO"/>
    <property type="match status" value="1"/>
</dbReference>
<name>HYD20_PLEO1</name>
<feature type="signal peptide" evidence="2">
    <location>
        <begin position="1"/>
        <end position="22"/>
    </location>
</feature>
<feature type="chain" id="PRO_5013985258" description="Class I hydrophobin 20">
    <location>
        <begin position="23"/>
        <end position="143"/>
    </location>
</feature>
<feature type="disulfide bond" evidence="1">
    <location>
        <begin position="54"/>
        <end position="123"/>
    </location>
</feature>
<feature type="disulfide bond" evidence="1">
    <location>
        <begin position="62"/>
        <end position="117"/>
    </location>
</feature>
<feature type="disulfide bond" evidence="1">
    <location>
        <begin position="63"/>
        <end position="102"/>
    </location>
</feature>
<feature type="disulfide bond" evidence="1">
    <location>
        <begin position="124"/>
        <end position="137"/>
    </location>
</feature>
<evidence type="ECO:0000250" key="1">
    <source>
        <dbReference type="UniProtKB" id="Q04571"/>
    </source>
</evidence>
<evidence type="ECO:0000255" key="2"/>
<evidence type="ECO:0000269" key="3">
    <source>
    </source>
</evidence>
<evidence type="ECO:0000303" key="4">
    <source>
    </source>
</evidence>
<evidence type="ECO:0000305" key="5"/>
<evidence type="ECO:0000305" key="6">
    <source>
    </source>
</evidence>
<gene>
    <name evidence="4" type="primary">Hydph20</name>
    <name type="ORF">PLEOSDRAFT_163649</name>
</gene>
<organism>
    <name type="scientific">Pleurotus ostreatus (strain PC15)</name>
    <name type="common">Oyster mushroom</name>
    <dbReference type="NCBI Taxonomy" id="1137138"/>
    <lineage>
        <taxon>Eukaryota</taxon>
        <taxon>Fungi</taxon>
        <taxon>Dikarya</taxon>
        <taxon>Basidiomycota</taxon>
        <taxon>Agaricomycotina</taxon>
        <taxon>Agaricomycetes</taxon>
        <taxon>Agaricomycetidae</taxon>
        <taxon>Agaricales</taxon>
        <taxon>Pleurotineae</taxon>
        <taxon>Pleurotaceae</taxon>
        <taxon>Pleurotus</taxon>
    </lineage>
</organism>
<sequence>MLSHPMKLLFFVFALSALLAAATPVVEVRDYQQFSRVSLINFISFNKARGGDLCANGKKTMCCGELKTFDKNILGLLDGLLTTVVGLAGEILKPTGLVGLECVPITLLGNGGLSDVCKANGVCCKDLTLRAAINVGCVPINIL</sequence>
<accession>A0A067N7P3</accession>